<keyword id="KW-0030">Aminoacyl-tRNA synthetase</keyword>
<keyword id="KW-0067">ATP-binding</keyword>
<keyword id="KW-0963">Cytoplasm</keyword>
<keyword id="KW-0436">Ligase</keyword>
<keyword id="KW-0479">Metal-binding</keyword>
<keyword id="KW-0547">Nucleotide-binding</keyword>
<keyword id="KW-0648">Protein biosynthesis</keyword>
<keyword id="KW-1185">Reference proteome</keyword>
<keyword id="KW-0862">Zinc</keyword>
<organism>
    <name type="scientific">Nitratiruptor sp. (strain SB155-2)</name>
    <dbReference type="NCBI Taxonomy" id="387092"/>
    <lineage>
        <taxon>Bacteria</taxon>
        <taxon>Pseudomonadati</taxon>
        <taxon>Campylobacterota</taxon>
        <taxon>Epsilonproteobacteria</taxon>
        <taxon>Nautiliales</taxon>
        <taxon>Nitratiruptoraceae</taxon>
        <taxon>Nitratiruptor</taxon>
    </lineage>
</organism>
<sequence>MVIYDSSKKEYCSLEPLKNRHIKVYVCGPTVYDDAHLGHARSAIAFDLLRRTLNALGYKTTFMKNFTDIDDKIIKKMNETGKSLQEITSYYIQRYLEDMEALGVQRADIEPKATQNLDAMIDMIERLLQKECAYQTPNGDIYFDTSKDEKYCTLSHKCDEESMSRIEPNPDKKNPADFALWKRCKGEGDVCFDSPFGKGRPGWHIECSAMIDKHLAYHDTPFQIDIHAGGADLLFPHHENEAAQTRCACNQELAKYWMHNGFVTISGEKMSKSLGNSFFIKDALKVYDGEILRFYLLSTHYRSDLNFNEEDLLASKKRLDKLYRLKKRVYGVQASTPQKEFVDELLQALSQDLNISKTLAAIDQFIAYANEHLDNNPKDKAFKKQIVANIEYISKLLGIGHKDAYSYFHLGISEEEKQKIEELIEKRTTAKKEKNFQLADSIREELRSMGIAIMDTPQGTLWEKI</sequence>
<proteinExistence type="inferred from homology"/>
<comment type="catalytic activity">
    <reaction evidence="1">
        <text>tRNA(Cys) + L-cysteine + ATP = L-cysteinyl-tRNA(Cys) + AMP + diphosphate</text>
        <dbReference type="Rhea" id="RHEA:17773"/>
        <dbReference type="Rhea" id="RHEA-COMP:9661"/>
        <dbReference type="Rhea" id="RHEA-COMP:9679"/>
        <dbReference type="ChEBI" id="CHEBI:30616"/>
        <dbReference type="ChEBI" id="CHEBI:33019"/>
        <dbReference type="ChEBI" id="CHEBI:35235"/>
        <dbReference type="ChEBI" id="CHEBI:78442"/>
        <dbReference type="ChEBI" id="CHEBI:78517"/>
        <dbReference type="ChEBI" id="CHEBI:456215"/>
        <dbReference type="EC" id="6.1.1.16"/>
    </reaction>
</comment>
<comment type="cofactor">
    <cofactor evidence="1">
        <name>Zn(2+)</name>
        <dbReference type="ChEBI" id="CHEBI:29105"/>
    </cofactor>
    <text evidence="1">Binds 1 zinc ion per subunit.</text>
</comment>
<comment type="subunit">
    <text evidence="1">Monomer.</text>
</comment>
<comment type="subcellular location">
    <subcellularLocation>
        <location evidence="1">Cytoplasm</location>
    </subcellularLocation>
</comment>
<comment type="similarity">
    <text evidence="1">Belongs to the class-I aminoacyl-tRNA synthetase family.</text>
</comment>
<protein>
    <recommendedName>
        <fullName evidence="1">Cysteine--tRNA ligase</fullName>
        <ecNumber evidence="1">6.1.1.16</ecNumber>
    </recommendedName>
    <alternativeName>
        <fullName evidence="1">Cysteinyl-tRNA synthetase</fullName>
        <shortName evidence="1">CysRS</shortName>
    </alternativeName>
</protein>
<reference key="1">
    <citation type="journal article" date="2007" name="Proc. Natl. Acad. Sci. U.S.A.">
        <title>Deep-sea vent epsilon-proteobacterial genomes provide insights into emergence of pathogens.</title>
        <authorList>
            <person name="Nakagawa S."/>
            <person name="Takaki Y."/>
            <person name="Shimamura S."/>
            <person name="Reysenbach A.-L."/>
            <person name="Takai K."/>
            <person name="Horikoshi K."/>
        </authorList>
    </citation>
    <scope>NUCLEOTIDE SEQUENCE [LARGE SCALE GENOMIC DNA]</scope>
    <source>
        <strain>SB155-2</strain>
    </source>
</reference>
<feature type="chain" id="PRO_1000006599" description="Cysteine--tRNA ligase">
    <location>
        <begin position="1"/>
        <end position="465"/>
    </location>
</feature>
<feature type="short sequence motif" description="'HIGH' region">
    <location>
        <begin position="29"/>
        <end position="39"/>
    </location>
</feature>
<feature type="short sequence motif" description="'KMSKS' region">
    <location>
        <begin position="269"/>
        <end position="273"/>
    </location>
</feature>
<feature type="binding site" evidence="1">
    <location>
        <position position="27"/>
    </location>
    <ligand>
        <name>Zn(2+)</name>
        <dbReference type="ChEBI" id="CHEBI:29105"/>
    </ligand>
</feature>
<feature type="binding site" evidence="1">
    <location>
        <position position="207"/>
    </location>
    <ligand>
        <name>Zn(2+)</name>
        <dbReference type="ChEBI" id="CHEBI:29105"/>
    </ligand>
</feature>
<feature type="binding site" evidence="1">
    <location>
        <position position="237"/>
    </location>
    <ligand>
        <name>Zn(2+)</name>
        <dbReference type="ChEBI" id="CHEBI:29105"/>
    </ligand>
</feature>
<feature type="binding site" evidence="1">
    <location>
        <position position="241"/>
    </location>
    <ligand>
        <name>Zn(2+)</name>
        <dbReference type="ChEBI" id="CHEBI:29105"/>
    </ligand>
</feature>
<feature type="binding site" evidence="1">
    <location>
        <position position="272"/>
    </location>
    <ligand>
        <name>ATP</name>
        <dbReference type="ChEBI" id="CHEBI:30616"/>
    </ligand>
</feature>
<dbReference type="EC" id="6.1.1.16" evidence="1"/>
<dbReference type="EMBL" id="AP009178">
    <property type="protein sequence ID" value="BAF70210.1"/>
    <property type="molecule type" value="Genomic_DNA"/>
</dbReference>
<dbReference type="RefSeq" id="WP_012082473.1">
    <property type="nucleotide sequence ID" value="NC_009662.1"/>
</dbReference>
<dbReference type="SMR" id="A6Q401"/>
<dbReference type="FunCoup" id="A6Q401">
    <property type="interactions" value="421"/>
</dbReference>
<dbReference type="STRING" id="387092.NIS_1101"/>
<dbReference type="KEGG" id="nis:NIS_1101"/>
<dbReference type="eggNOG" id="COG0215">
    <property type="taxonomic scope" value="Bacteria"/>
</dbReference>
<dbReference type="HOGENOM" id="CLU_013528_0_1_7"/>
<dbReference type="InParanoid" id="A6Q401"/>
<dbReference type="OrthoDB" id="9815130at2"/>
<dbReference type="Proteomes" id="UP000001118">
    <property type="component" value="Chromosome"/>
</dbReference>
<dbReference type="GO" id="GO:0005829">
    <property type="term" value="C:cytosol"/>
    <property type="evidence" value="ECO:0007669"/>
    <property type="project" value="TreeGrafter"/>
</dbReference>
<dbReference type="GO" id="GO:0005524">
    <property type="term" value="F:ATP binding"/>
    <property type="evidence" value="ECO:0007669"/>
    <property type="project" value="UniProtKB-UniRule"/>
</dbReference>
<dbReference type="GO" id="GO:0004817">
    <property type="term" value="F:cysteine-tRNA ligase activity"/>
    <property type="evidence" value="ECO:0007669"/>
    <property type="project" value="UniProtKB-UniRule"/>
</dbReference>
<dbReference type="GO" id="GO:0008270">
    <property type="term" value="F:zinc ion binding"/>
    <property type="evidence" value="ECO:0007669"/>
    <property type="project" value="UniProtKB-UniRule"/>
</dbReference>
<dbReference type="GO" id="GO:0006423">
    <property type="term" value="P:cysteinyl-tRNA aminoacylation"/>
    <property type="evidence" value="ECO:0007669"/>
    <property type="project" value="UniProtKB-UniRule"/>
</dbReference>
<dbReference type="CDD" id="cd00672">
    <property type="entry name" value="CysRS_core"/>
    <property type="match status" value="1"/>
</dbReference>
<dbReference type="Gene3D" id="1.20.120.1910">
    <property type="entry name" value="Cysteine-tRNA ligase, C-terminal anti-codon recognition domain"/>
    <property type="match status" value="1"/>
</dbReference>
<dbReference type="Gene3D" id="3.40.50.620">
    <property type="entry name" value="HUPs"/>
    <property type="match status" value="1"/>
</dbReference>
<dbReference type="HAMAP" id="MF_00041">
    <property type="entry name" value="Cys_tRNA_synth"/>
    <property type="match status" value="1"/>
</dbReference>
<dbReference type="InterPro" id="IPR015803">
    <property type="entry name" value="Cys-tRNA-ligase"/>
</dbReference>
<dbReference type="InterPro" id="IPR024909">
    <property type="entry name" value="Cys-tRNA/MSH_ligase"/>
</dbReference>
<dbReference type="InterPro" id="IPR014729">
    <property type="entry name" value="Rossmann-like_a/b/a_fold"/>
</dbReference>
<dbReference type="InterPro" id="IPR032678">
    <property type="entry name" value="tRNA-synt_1_cat_dom"/>
</dbReference>
<dbReference type="InterPro" id="IPR009080">
    <property type="entry name" value="tRNAsynth_Ia_anticodon-bd"/>
</dbReference>
<dbReference type="NCBIfam" id="TIGR00435">
    <property type="entry name" value="cysS"/>
    <property type="match status" value="1"/>
</dbReference>
<dbReference type="PANTHER" id="PTHR10890:SF3">
    <property type="entry name" value="CYSTEINE--TRNA LIGASE, CYTOPLASMIC"/>
    <property type="match status" value="1"/>
</dbReference>
<dbReference type="PANTHER" id="PTHR10890">
    <property type="entry name" value="CYSTEINYL-TRNA SYNTHETASE"/>
    <property type="match status" value="1"/>
</dbReference>
<dbReference type="Pfam" id="PF01406">
    <property type="entry name" value="tRNA-synt_1e"/>
    <property type="match status" value="1"/>
</dbReference>
<dbReference type="PRINTS" id="PR00983">
    <property type="entry name" value="TRNASYNTHCYS"/>
</dbReference>
<dbReference type="SUPFAM" id="SSF47323">
    <property type="entry name" value="Anticodon-binding domain of a subclass of class I aminoacyl-tRNA synthetases"/>
    <property type="match status" value="1"/>
</dbReference>
<dbReference type="SUPFAM" id="SSF52374">
    <property type="entry name" value="Nucleotidylyl transferase"/>
    <property type="match status" value="1"/>
</dbReference>
<accession>A6Q401</accession>
<evidence type="ECO:0000255" key="1">
    <source>
        <dbReference type="HAMAP-Rule" id="MF_00041"/>
    </source>
</evidence>
<gene>
    <name evidence="1" type="primary">cysS</name>
    <name type="ordered locus">NIS_1101</name>
</gene>
<name>SYC_NITSB</name>